<keyword id="KW-0167">Capsid protein</keyword>
<keyword id="KW-1048">Host nucleus</keyword>
<keyword id="KW-1185">Reference proteome</keyword>
<keyword id="KW-0946">Virion</keyword>
<feature type="chain" id="PRO_0000406854" description="Triplex capsid protein 2">
    <location>
        <begin position="1"/>
        <end position="321"/>
    </location>
</feature>
<protein>
    <recommendedName>
        <fullName evidence="1">Triplex capsid protein 2</fullName>
    </recommendedName>
</protein>
<comment type="function">
    <text evidence="1">Structural component of the T=16 icosahedral capsid. The capsid is composed of pentamers and hexamers of major capsid protein/MCP, which are linked together by heterotrimers called triplexes. These triplexes are formed by a single molecule of triplex protein 1/TRX1 and two copies of triplex protein 2/TRX2. Additionally, TRX1 is required for efficient transport of TRX2 to the nucleus, which is the site of capsid assembly.</text>
</comment>
<comment type="subunit">
    <text evidence="1">Interacts with TRX1 and major capisd protein/MCP.</text>
</comment>
<comment type="subcellular location">
    <subcellularLocation>
        <location evidence="1">Virion</location>
    </subcellularLocation>
    <subcellularLocation>
        <location evidence="1">Host nucleus</location>
    </subcellularLocation>
</comment>
<comment type="similarity">
    <text evidence="1">Belongs to the herpesviridae TRX2 protein family.</text>
</comment>
<reference key="1">
    <citation type="journal article" date="2006" name="J. Virol.">
        <title>Psittacid herpesvirus 1 and infectious laryngotracheitis virus: Comparative genome sequence analysis of two avian alphaherpesviruses.</title>
        <authorList>
            <person name="Thureen D.R."/>
            <person name="Keeler C.L. Jr."/>
        </authorList>
    </citation>
    <scope>NUCLEOTIDE SEQUENCE [LARGE SCALE GENOMIC DNA]</scope>
</reference>
<organismHost>
    <name type="scientific">Amazona oratrix</name>
    <name type="common">yellow-headed parrot</name>
    <dbReference type="NCBI Taxonomy" id="152276"/>
</organismHost>
<evidence type="ECO:0000255" key="1">
    <source>
        <dbReference type="HAMAP-Rule" id="MF_04019"/>
    </source>
</evidence>
<accession>Q6UDI3</accession>
<dbReference type="EMBL" id="AY372243">
    <property type="protein sequence ID" value="AAQ73727.1"/>
    <property type="molecule type" value="Genomic_DNA"/>
</dbReference>
<dbReference type="RefSeq" id="NP_944421.1">
    <property type="nucleotide sequence ID" value="NC_005264.1"/>
</dbReference>
<dbReference type="SMR" id="Q6UDI3"/>
<dbReference type="GeneID" id="2656978"/>
<dbReference type="KEGG" id="vg:2656978"/>
<dbReference type="Proteomes" id="UP000006840">
    <property type="component" value="Segment"/>
</dbReference>
<dbReference type="GO" id="GO:0042025">
    <property type="term" value="C:host cell nucleus"/>
    <property type="evidence" value="ECO:0007669"/>
    <property type="project" value="UniProtKB-SubCell"/>
</dbReference>
<dbReference type="GO" id="GO:0019028">
    <property type="term" value="C:viral capsid"/>
    <property type="evidence" value="ECO:0007669"/>
    <property type="project" value="UniProtKB-KW"/>
</dbReference>
<dbReference type="GO" id="GO:0005198">
    <property type="term" value="F:structural molecule activity"/>
    <property type="evidence" value="ECO:0007669"/>
    <property type="project" value="InterPro"/>
</dbReference>
<dbReference type="HAMAP" id="MF_04019">
    <property type="entry name" value="HSV_TRX2"/>
    <property type="match status" value="1"/>
</dbReference>
<dbReference type="InterPro" id="IPR002690">
    <property type="entry name" value="Herpes_capsid_2"/>
</dbReference>
<dbReference type="Pfam" id="PF01802">
    <property type="entry name" value="Herpes_V23"/>
    <property type="match status" value="1"/>
</dbReference>
<gene>
    <name evidence="1" type="primary">TRX2</name>
    <name type="ordered locus">UL18</name>
</gene>
<sequence>MAHATSSAYEVKITLPGNLTRDEEDRLRCLTGTILMAPSLRRCLFLHDVDRNSYYVHGSEPDYATSLAAYRRRFPLLVTAVGRQELSAVSLSIGCPKGLNFRNTGPFQLLNGSNVSLIPPIGGRWRVELLSCGSVIEPAMTIPTEVGSELLGKILAGMTYEFCARNQIPADRPAEVYRVACDNKALDLTQAIRGGDSDLQDTMKTLFASVLFAMNEGVLQVMTLMPALLAGGNTNPFLNALLQMQSATRLSAQIFNPPTLPVHDPTGGARRYNVFDAFASWLTMSHRLGELFHMKPALKVVMFYSDVSAIDEGQTANAIVP</sequence>
<name>TRX2_PSHV1</name>
<organism>
    <name type="scientific">Psittacid herpesvirus 1 (isolate Amazon parrot/-/97-0001/1997)</name>
    <name type="common">PsHV-1</name>
    <name type="synonym">Pacheco's disease virus</name>
    <dbReference type="NCBI Taxonomy" id="670426"/>
    <lineage>
        <taxon>Viruses</taxon>
        <taxon>Duplodnaviria</taxon>
        <taxon>Heunggongvirae</taxon>
        <taxon>Peploviricota</taxon>
        <taxon>Herviviricetes</taxon>
        <taxon>Herpesvirales</taxon>
        <taxon>Orthoherpesviridae</taxon>
        <taxon>Alphaherpesvirinae</taxon>
        <taxon>Iltovirus</taxon>
        <taxon>Iltovirus psittacidalpha1</taxon>
        <taxon>Psittacid alphaherpesvirus 1</taxon>
    </lineage>
</organism>
<proteinExistence type="inferred from homology"/>